<keyword id="KW-0963">Cytoplasm</keyword>
<keyword id="KW-0520">NAD</keyword>
<keyword id="KW-0521">NADP</keyword>
<keyword id="KW-0560">Oxidoreductase</keyword>
<comment type="function">
    <text evidence="1">Catalyzes the NADPH-dependent reduction of glyoxylate and hydroxypyruvate into glycolate and glycerate, respectively.</text>
</comment>
<comment type="catalytic activity">
    <reaction evidence="1">
        <text>glycolate + NADP(+) = glyoxylate + NADPH + H(+)</text>
        <dbReference type="Rhea" id="RHEA:10992"/>
        <dbReference type="ChEBI" id="CHEBI:15378"/>
        <dbReference type="ChEBI" id="CHEBI:29805"/>
        <dbReference type="ChEBI" id="CHEBI:36655"/>
        <dbReference type="ChEBI" id="CHEBI:57783"/>
        <dbReference type="ChEBI" id="CHEBI:58349"/>
        <dbReference type="EC" id="1.1.1.79"/>
    </reaction>
</comment>
<comment type="catalytic activity">
    <reaction evidence="1">
        <text>(R)-glycerate + NAD(+) = 3-hydroxypyruvate + NADH + H(+)</text>
        <dbReference type="Rhea" id="RHEA:17905"/>
        <dbReference type="ChEBI" id="CHEBI:15378"/>
        <dbReference type="ChEBI" id="CHEBI:16659"/>
        <dbReference type="ChEBI" id="CHEBI:17180"/>
        <dbReference type="ChEBI" id="CHEBI:57540"/>
        <dbReference type="ChEBI" id="CHEBI:57945"/>
        <dbReference type="EC" id="1.1.1.81"/>
    </reaction>
</comment>
<comment type="catalytic activity">
    <reaction evidence="1">
        <text>(R)-glycerate + NADP(+) = 3-hydroxypyruvate + NADPH + H(+)</text>
        <dbReference type="Rhea" id="RHEA:18657"/>
        <dbReference type="ChEBI" id="CHEBI:15378"/>
        <dbReference type="ChEBI" id="CHEBI:16659"/>
        <dbReference type="ChEBI" id="CHEBI:17180"/>
        <dbReference type="ChEBI" id="CHEBI:57783"/>
        <dbReference type="ChEBI" id="CHEBI:58349"/>
        <dbReference type="EC" id="1.1.1.81"/>
    </reaction>
</comment>
<comment type="subunit">
    <text evidence="1">Homodimer.</text>
</comment>
<comment type="subcellular location">
    <subcellularLocation>
        <location evidence="1">Cytoplasm</location>
    </subcellularLocation>
</comment>
<comment type="similarity">
    <text evidence="1">Belongs to the D-isomer specific 2-hydroxyacid dehydrogenase family. GhrB subfamily.</text>
</comment>
<organism>
    <name type="scientific">Escherichia coli O8 (strain IAI1)</name>
    <dbReference type="NCBI Taxonomy" id="585034"/>
    <lineage>
        <taxon>Bacteria</taxon>
        <taxon>Pseudomonadati</taxon>
        <taxon>Pseudomonadota</taxon>
        <taxon>Gammaproteobacteria</taxon>
        <taxon>Enterobacterales</taxon>
        <taxon>Enterobacteriaceae</taxon>
        <taxon>Escherichia</taxon>
    </lineage>
</organism>
<sequence>MKPSVILYKALPDDLLQRLQEHFTVHQVANLSPQTVEQNAAIFAEAEGLLGSNENVDAALLEKMPKLRATSTISVGYDNFDVDALTARKILLMHTPTVLTETVADTLMALVLSTARRVVEVAERVKAGEWTASIGPDWYGTDVHHKTLGIVGMGRIGMALAQRAHFGFNMPILYNARRHHKEAEERFNARYCDLDTLLQESDFVCLILPLTDETHHLFGAEQFAKMKSSAIFINAGRGPVVDENALIAALQKGEIHAAGLDVFEQEPLSVDSPLLSMANVVAVPHIGSATHETRYGMAACAVDNLIDALQGKVEKNCVNPHVAD</sequence>
<dbReference type="EC" id="1.1.1.79" evidence="1"/>
<dbReference type="EC" id="1.1.1.81" evidence="1"/>
<dbReference type="EMBL" id="CU928160">
    <property type="protein sequence ID" value="CAR00515.1"/>
    <property type="molecule type" value="Genomic_DNA"/>
</dbReference>
<dbReference type="RefSeq" id="WP_000805027.1">
    <property type="nucleotide sequence ID" value="NC_011741.1"/>
</dbReference>
<dbReference type="SMR" id="B7M3H6"/>
<dbReference type="GeneID" id="75203026"/>
<dbReference type="KEGG" id="ecr:ECIAI1_3718"/>
<dbReference type="HOGENOM" id="CLU_019796_1_2_6"/>
<dbReference type="GO" id="GO:0005829">
    <property type="term" value="C:cytosol"/>
    <property type="evidence" value="ECO:0007669"/>
    <property type="project" value="TreeGrafter"/>
</dbReference>
<dbReference type="GO" id="GO:0005886">
    <property type="term" value="C:plasma membrane"/>
    <property type="evidence" value="ECO:0007669"/>
    <property type="project" value="UniProtKB-UniRule"/>
</dbReference>
<dbReference type="GO" id="GO:0030267">
    <property type="term" value="F:glyoxylate reductase (NADPH) activity"/>
    <property type="evidence" value="ECO:0007669"/>
    <property type="project" value="UniProtKB-UniRule"/>
</dbReference>
<dbReference type="GO" id="GO:0008465">
    <property type="term" value="F:hydroxypyruvate reductase (NADH) activity"/>
    <property type="evidence" value="ECO:0007669"/>
    <property type="project" value="RHEA"/>
</dbReference>
<dbReference type="GO" id="GO:0120509">
    <property type="term" value="F:hydroxypyruvate reductase (NADPH) activity"/>
    <property type="evidence" value="ECO:0007669"/>
    <property type="project" value="RHEA"/>
</dbReference>
<dbReference type="GO" id="GO:0051287">
    <property type="term" value="F:NAD binding"/>
    <property type="evidence" value="ECO:0007669"/>
    <property type="project" value="InterPro"/>
</dbReference>
<dbReference type="CDD" id="cd05301">
    <property type="entry name" value="GDH"/>
    <property type="match status" value="1"/>
</dbReference>
<dbReference type="FunFam" id="3.40.50.720:FF:000026">
    <property type="entry name" value="Glyoxylate/hydroxypyruvate reductase B"/>
    <property type="match status" value="1"/>
</dbReference>
<dbReference type="Gene3D" id="3.40.50.720">
    <property type="entry name" value="NAD(P)-binding Rossmann-like Domain"/>
    <property type="match status" value="2"/>
</dbReference>
<dbReference type="HAMAP" id="MF_01667">
    <property type="entry name" value="2_Hacid_dh_C_GhrB"/>
    <property type="match status" value="1"/>
</dbReference>
<dbReference type="InterPro" id="IPR050223">
    <property type="entry name" value="D-isomer_2-hydroxyacid_DH"/>
</dbReference>
<dbReference type="InterPro" id="IPR006139">
    <property type="entry name" value="D-isomer_2_OHA_DH_cat_dom"/>
</dbReference>
<dbReference type="InterPro" id="IPR029753">
    <property type="entry name" value="D-isomer_DH_CS"/>
</dbReference>
<dbReference type="InterPro" id="IPR006140">
    <property type="entry name" value="D-isomer_DH_NAD-bd"/>
</dbReference>
<dbReference type="InterPro" id="IPR023756">
    <property type="entry name" value="Glyo/OHPyrv_Rdtase_B"/>
</dbReference>
<dbReference type="InterPro" id="IPR036291">
    <property type="entry name" value="NAD(P)-bd_dom_sf"/>
</dbReference>
<dbReference type="NCBIfam" id="NF011938">
    <property type="entry name" value="PRK15409.1"/>
    <property type="match status" value="1"/>
</dbReference>
<dbReference type="PANTHER" id="PTHR10996">
    <property type="entry name" value="2-HYDROXYACID DEHYDROGENASE-RELATED"/>
    <property type="match status" value="1"/>
</dbReference>
<dbReference type="PANTHER" id="PTHR10996:SF283">
    <property type="entry name" value="GLYOXYLATE_HYDROXYPYRUVATE REDUCTASE B"/>
    <property type="match status" value="1"/>
</dbReference>
<dbReference type="Pfam" id="PF00389">
    <property type="entry name" value="2-Hacid_dh"/>
    <property type="match status" value="1"/>
</dbReference>
<dbReference type="Pfam" id="PF02826">
    <property type="entry name" value="2-Hacid_dh_C"/>
    <property type="match status" value="1"/>
</dbReference>
<dbReference type="SUPFAM" id="SSF52283">
    <property type="entry name" value="Formate/glycerate dehydrogenase catalytic domain-like"/>
    <property type="match status" value="1"/>
</dbReference>
<dbReference type="SUPFAM" id="SSF51735">
    <property type="entry name" value="NAD(P)-binding Rossmann-fold domains"/>
    <property type="match status" value="1"/>
</dbReference>
<dbReference type="PROSITE" id="PS00670">
    <property type="entry name" value="D_2_HYDROXYACID_DH_2"/>
    <property type="match status" value="1"/>
</dbReference>
<dbReference type="PROSITE" id="PS00671">
    <property type="entry name" value="D_2_HYDROXYACID_DH_3"/>
    <property type="match status" value="1"/>
</dbReference>
<gene>
    <name evidence="1" type="primary">ghrB</name>
    <name type="ordered locus">ECIAI1_3718</name>
</gene>
<evidence type="ECO:0000255" key="1">
    <source>
        <dbReference type="HAMAP-Rule" id="MF_01667"/>
    </source>
</evidence>
<reference key="1">
    <citation type="journal article" date="2009" name="PLoS Genet.">
        <title>Organised genome dynamics in the Escherichia coli species results in highly diverse adaptive paths.</title>
        <authorList>
            <person name="Touchon M."/>
            <person name="Hoede C."/>
            <person name="Tenaillon O."/>
            <person name="Barbe V."/>
            <person name="Baeriswyl S."/>
            <person name="Bidet P."/>
            <person name="Bingen E."/>
            <person name="Bonacorsi S."/>
            <person name="Bouchier C."/>
            <person name="Bouvet O."/>
            <person name="Calteau A."/>
            <person name="Chiapello H."/>
            <person name="Clermont O."/>
            <person name="Cruveiller S."/>
            <person name="Danchin A."/>
            <person name="Diard M."/>
            <person name="Dossat C."/>
            <person name="Karoui M.E."/>
            <person name="Frapy E."/>
            <person name="Garry L."/>
            <person name="Ghigo J.M."/>
            <person name="Gilles A.M."/>
            <person name="Johnson J."/>
            <person name="Le Bouguenec C."/>
            <person name="Lescat M."/>
            <person name="Mangenot S."/>
            <person name="Martinez-Jehanne V."/>
            <person name="Matic I."/>
            <person name="Nassif X."/>
            <person name="Oztas S."/>
            <person name="Petit M.A."/>
            <person name="Pichon C."/>
            <person name="Rouy Z."/>
            <person name="Ruf C.S."/>
            <person name="Schneider D."/>
            <person name="Tourret J."/>
            <person name="Vacherie B."/>
            <person name="Vallenet D."/>
            <person name="Medigue C."/>
            <person name="Rocha E.P.C."/>
            <person name="Denamur E."/>
        </authorList>
    </citation>
    <scope>NUCLEOTIDE SEQUENCE [LARGE SCALE GENOMIC DNA]</scope>
    <source>
        <strain>IAI1</strain>
    </source>
</reference>
<proteinExistence type="inferred from homology"/>
<name>GHRB_ECO8A</name>
<protein>
    <recommendedName>
        <fullName evidence="1">Glyoxylate/hydroxypyruvate reductase B</fullName>
        <ecNumber evidence="1">1.1.1.79</ecNumber>
        <ecNumber evidence="1">1.1.1.81</ecNumber>
    </recommendedName>
</protein>
<accession>B7M3H6</accession>
<feature type="chain" id="PRO_1000187288" description="Glyoxylate/hydroxypyruvate reductase B">
    <location>
        <begin position="1"/>
        <end position="324"/>
    </location>
</feature>
<feature type="active site" evidence="1">
    <location>
        <position position="237"/>
    </location>
</feature>
<feature type="active site" evidence="1">
    <location>
        <position position="266"/>
    </location>
</feature>
<feature type="active site" description="Proton donor" evidence="1">
    <location>
        <position position="285"/>
    </location>
</feature>